<feature type="peptide" id="PRO_0000015805" description="Insulin B chain">
    <location>
        <begin position="1"/>
        <end position="30"/>
    </location>
</feature>
<feature type="peptide" id="PRO_0000015806" description="Insulin A chain">
    <location>
        <begin position="31"/>
        <end position="51"/>
    </location>
</feature>
<feature type="disulfide bond" description="Interchain (between B and A chains)">
    <location>
        <begin position="7"/>
        <end position="37"/>
    </location>
</feature>
<feature type="disulfide bond" description="Interchain (between B and A chains)">
    <location>
        <begin position="19"/>
        <end position="50"/>
    </location>
</feature>
<feature type="disulfide bond">
    <location>
        <begin position="36"/>
        <end position="41"/>
    </location>
</feature>
<feature type="non-consecutive residues" evidence="1">
    <location>
        <begin position="30"/>
        <end position="31"/>
    </location>
</feature>
<name>INS_DIDVI</name>
<protein>
    <recommendedName>
        <fullName>Insulin</fullName>
    </recommendedName>
    <component>
        <recommendedName>
            <fullName>Insulin B chain</fullName>
        </recommendedName>
    </component>
    <component>
        <recommendedName>
            <fullName>Insulin A chain</fullName>
        </recommendedName>
    </component>
</protein>
<accession>P18109</accession>
<gene>
    <name type="primary">INS</name>
</gene>
<keyword id="KW-0119">Carbohydrate metabolism</keyword>
<keyword id="KW-0903">Direct protein sequencing</keyword>
<keyword id="KW-1015">Disulfide bond</keyword>
<keyword id="KW-0313">Glucose metabolism</keyword>
<keyword id="KW-0372">Hormone</keyword>
<keyword id="KW-0964">Secreted</keyword>
<proteinExistence type="evidence at protein level"/>
<evidence type="ECO:0000305" key="1"/>
<comment type="function">
    <text>Insulin decreases blood glucose concentration. It increases cell permeability to monosaccharides, amino acids and fatty acids. It accelerates glycolysis, the pentose phosphate cycle, and glycogen synthesis in liver.</text>
</comment>
<comment type="subunit">
    <text>Heterodimer of a B chain and an A chain linked by two disulfide bonds.</text>
</comment>
<comment type="subcellular location">
    <subcellularLocation>
        <location>Secreted</location>
    </subcellularLocation>
</comment>
<comment type="similarity">
    <text evidence="1">Belongs to the insulin family.</text>
</comment>
<sequence length="51" mass="5732">LVNQHLCGSHLVEALYLVCGERGFFYTPKAGIVEQCCNSICSLYQLETYCN</sequence>
<reference key="1">
    <citation type="journal article" date="1989" name="Peptides">
        <title>Opossum insulin, glucagon and pancreatic polypeptide: amino acid sequences.</title>
        <authorList>
            <person name="Yu J.-H."/>
            <person name="Eng J."/>
            <person name="Rattan S."/>
            <person name="Yalow R.S."/>
        </authorList>
    </citation>
    <scope>PROTEIN SEQUENCE</scope>
    <source>
        <tissue>Pancreas</tissue>
    </source>
</reference>
<organism>
    <name type="scientific">Didelphis virginiana</name>
    <name type="common">North American opossum</name>
    <name type="synonym">Didelphis marsupialis virginiana</name>
    <dbReference type="NCBI Taxonomy" id="9267"/>
    <lineage>
        <taxon>Eukaryota</taxon>
        <taxon>Metazoa</taxon>
        <taxon>Chordata</taxon>
        <taxon>Craniata</taxon>
        <taxon>Vertebrata</taxon>
        <taxon>Euteleostomi</taxon>
        <taxon>Mammalia</taxon>
        <taxon>Metatheria</taxon>
        <taxon>Didelphimorphia</taxon>
        <taxon>Didelphidae</taxon>
        <taxon>Didelphis</taxon>
    </lineage>
</organism>
<dbReference type="PIR" id="JQ0362">
    <property type="entry name" value="JQ0362"/>
</dbReference>
<dbReference type="SMR" id="P18109"/>
<dbReference type="GO" id="GO:0005615">
    <property type="term" value="C:extracellular space"/>
    <property type="evidence" value="ECO:0007669"/>
    <property type="project" value="TreeGrafter"/>
</dbReference>
<dbReference type="GO" id="GO:0005179">
    <property type="term" value="F:hormone activity"/>
    <property type="evidence" value="ECO:0007669"/>
    <property type="project" value="UniProtKB-KW"/>
</dbReference>
<dbReference type="GO" id="GO:1901701">
    <property type="term" value="P:cellular response to oxygen-containing compound"/>
    <property type="evidence" value="ECO:0007669"/>
    <property type="project" value="UniProtKB-ARBA"/>
</dbReference>
<dbReference type="GO" id="GO:0042593">
    <property type="term" value="P:glucose homeostasis"/>
    <property type="evidence" value="ECO:0007669"/>
    <property type="project" value="TreeGrafter"/>
</dbReference>
<dbReference type="GO" id="GO:0006006">
    <property type="term" value="P:glucose metabolic process"/>
    <property type="evidence" value="ECO:0007669"/>
    <property type="project" value="UniProtKB-KW"/>
</dbReference>
<dbReference type="GO" id="GO:0050714">
    <property type="term" value="P:positive regulation of protein secretion"/>
    <property type="evidence" value="ECO:0007669"/>
    <property type="project" value="TreeGrafter"/>
</dbReference>
<dbReference type="CDD" id="cd04367">
    <property type="entry name" value="IlGF_insulin_like"/>
    <property type="match status" value="1"/>
</dbReference>
<dbReference type="Gene3D" id="1.10.100.10">
    <property type="entry name" value="Insulin-like"/>
    <property type="match status" value="2"/>
</dbReference>
<dbReference type="InterPro" id="IPR004825">
    <property type="entry name" value="Insulin"/>
</dbReference>
<dbReference type="InterPro" id="IPR016179">
    <property type="entry name" value="Insulin-like"/>
</dbReference>
<dbReference type="InterPro" id="IPR036438">
    <property type="entry name" value="Insulin-like_sf"/>
</dbReference>
<dbReference type="InterPro" id="IPR022353">
    <property type="entry name" value="Insulin_CS"/>
</dbReference>
<dbReference type="InterPro" id="IPR022352">
    <property type="entry name" value="Insulin_family"/>
</dbReference>
<dbReference type="PANTHER" id="PTHR11454:SF9">
    <property type="entry name" value="INSULIN"/>
    <property type="match status" value="1"/>
</dbReference>
<dbReference type="PANTHER" id="PTHR11454">
    <property type="entry name" value="INSULIN/INSULIN GROWTH FACTOR"/>
    <property type="match status" value="1"/>
</dbReference>
<dbReference type="Pfam" id="PF00049">
    <property type="entry name" value="Insulin"/>
    <property type="match status" value="1"/>
</dbReference>
<dbReference type="PRINTS" id="PR00277">
    <property type="entry name" value="INSULIN"/>
</dbReference>
<dbReference type="PRINTS" id="PR00276">
    <property type="entry name" value="INSULINFAMLY"/>
</dbReference>
<dbReference type="SMART" id="SM00078">
    <property type="entry name" value="IlGF"/>
    <property type="match status" value="1"/>
</dbReference>
<dbReference type="SUPFAM" id="SSF56994">
    <property type="entry name" value="Insulin-like"/>
    <property type="match status" value="1"/>
</dbReference>
<dbReference type="PROSITE" id="PS00262">
    <property type="entry name" value="INSULIN"/>
    <property type="match status" value="1"/>
</dbReference>